<proteinExistence type="inferred from homology"/>
<protein>
    <recommendedName>
        <fullName evidence="1">Aspartate carbamoyltransferase catalytic subunit</fullName>
        <ecNumber evidence="1">2.1.3.2</ecNumber>
    </recommendedName>
    <alternativeName>
        <fullName evidence="1">Aspartate transcarbamylase</fullName>
        <shortName evidence="1">ATCase</shortName>
    </alternativeName>
</protein>
<sequence>MEKLNLVSLPHFVSVENLSAEEVEALINRAEYFKNGGATPRLTQPVYISNMFFEDSSRTHTSFEMAERKLGLTVIPFDPAHSSVNKGETLYDTSLIMDAVGVNIEVIRHSQNEYYQDLIHPKKHQHLNIGVINAGDGSGQHPSQCLLDMMTIHEHFGHFKGLKVAIVGDITNSRVAKSNMELLTRLGAEVYFSGPEYWYSSEYDKYGKYEKLDKLIPEMDVMMLLRVQHERHSDDPNEKNFDAQAYHEEYGINHKRYQELKPDTIIMHPGPINHDVELSGDLVESDKCMFTRQMQNGVFMRMAMIEAVLRGRKLGGLN</sequence>
<evidence type="ECO:0000255" key="1">
    <source>
        <dbReference type="HAMAP-Rule" id="MF_00001"/>
    </source>
</evidence>
<evidence type="ECO:0000305" key="2"/>
<gene>
    <name evidence="1" type="primary">pyrB</name>
    <name type="ordered locus">LGAS_1090</name>
</gene>
<accession>Q043A9</accession>
<comment type="function">
    <text evidence="1">Catalyzes the condensation of carbamoyl phosphate and aspartate to form carbamoyl aspartate and inorganic phosphate, the committed step in the de novo pyrimidine nucleotide biosynthesis pathway.</text>
</comment>
<comment type="catalytic activity">
    <reaction evidence="1">
        <text>carbamoyl phosphate + L-aspartate = N-carbamoyl-L-aspartate + phosphate + H(+)</text>
        <dbReference type="Rhea" id="RHEA:20013"/>
        <dbReference type="ChEBI" id="CHEBI:15378"/>
        <dbReference type="ChEBI" id="CHEBI:29991"/>
        <dbReference type="ChEBI" id="CHEBI:32814"/>
        <dbReference type="ChEBI" id="CHEBI:43474"/>
        <dbReference type="ChEBI" id="CHEBI:58228"/>
        <dbReference type="EC" id="2.1.3.2"/>
    </reaction>
</comment>
<comment type="pathway">
    <text evidence="1">Pyrimidine metabolism; UMP biosynthesis via de novo pathway; (S)-dihydroorotate from bicarbonate: step 2/3.</text>
</comment>
<comment type="subunit">
    <text evidence="1">Heterododecamer (2C3:3R2) of six catalytic PyrB chains organized as two trimers (C3), and six regulatory PyrI chains organized as three dimers (R2).</text>
</comment>
<comment type="similarity">
    <text evidence="1">Belongs to the aspartate/ornithine carbamoyltransferase superfamily. ATCase family.</text>
</comment>
<comment type="sequence caution" evidence="2">
    <conflict type="erroneous initiation">
        <sequence resource="EMBL-CDS" id="ABJ60463"/>
    </conflict>
</comment>
<organism>
    <name type="scientific">Lactobacillus gasseri (strain ATCC 33323 / DSM 20243 / BCRC 14619 / CIP 102991 / JCM 1131 / KCTC 3163 / NCIMB 11718 / NCTC 13722 / AM63)</name>
    <dbReference type="NCBI Taxonomy" id="324831"/>
    <lineage>
        <taxon>Bacteria</taxon>
        <taxon>Bacillati</taxon>
        <taxon>Bacillota</taxon>
        <taxon>Bacilli</taxon>
        <taxon>Lactobacillales</taxon>
        <taxon>Lactobacillaceae</taxon>
        <taxon>Lactobacillus</taxon>
    </lineage>
</organism>
<name>PYRB_LACGA</name>
<feature type="chain" id="PRO_0000321110" description="Aspartate carbamoyltransferase catalytic subunit">
    <location>
        <begin position="1"/>
        <end position="318"/>
    </location>
</feature>
<feature type="binding site" evidence="1">
    <location>
        <position position="58"/>
    </location>
    <ligand>
        <name>carbamoyl phosphate</name>
        <dbReference type="ChEBI" id="CHEBI:58228"/>
    </ligand>
</feature>
<feature type="binding site" evidence="1">
    <location>
        <position position="59"/>
    </location>
    <ligand>
        <name>carbamoyl phosphate</name>
        <dbReference type="ChEBI" id="CHEBI:58228"/>
    </ligand>
</feature>
<feature type="binding site" evidence="1">
    <location>
        <position position="86"/>
    </location>
    <ligand>
        <name>L-aspartate</name>
        <dbReference type="ChEBI" id="CHEBI:29991"/>
    </ligand>
</feature>
<feature type="binding site" evidence="1">
    <location>
        <position position="108"/>
    </location>
    <ligand>
        <name>carbamoyl phosphate</name>
        <dbReference type="ChEBI" id="CHEBI:58228"/>
    </ligand>
</feature>
<feature type="binding site" evidence="1">
    <location>
        <position position="141"/>
    </location>
    <ligand>
        <name>carbamoyl phosphate</name>
        <dbReference type="ChEBI" id="CHEBI:58228"/>
    </ligand>
</feature>
<feature type="binding site" evidence="1">
    <location>
        <position position="144"/>
    </location>
    <ligand>
        <name>carbamoyl phosphate</name>
        <dbReference type="ChEBI" id="CHEBI:58228"/>
    </ligand>
</feature>
<feature type="binding site" evidence="1">
    <location>
        <position position="174"/>
    </location>
    <ligand>
        <name>L-aspartate</name>
        <dbReference type="ChEBI" id="CHEBI:29991"/>
    </ligand>
</feature>
<feature type="binding site" evidence="1">
    <location>
        <position position="226"/>
    </location>
    <ligand>
        <name>L-aspartate</name>
        <dbReference type="ChEBI" id="CHEBI:29991"/>
    </ligand>
</feature>
<feature type="binding site" evidence="1">
    <location>
        <position position="270"/>
    </location>
    <ligand>
        <name>carbamoyl phosphate</name>
        <dbReference type="ChEBI" id="CHEBI:58228"/>
    </ligand>
</feature>
<feature type="binding site" evidence="1">
    <location>
        <position position="271"/>
    </location>
    <ligand>
        <name>carbamoyl phosphate</name>
        <dbReference type="ChEBI" id="CHEBI:58228"/>
    </ligand>
</feature>
<keyword id="KW-0665">Pyrimidine biosynthesis</keyword>
<keyword id="KW-0808">Transferase</keyword>
<dbReference type="EC" id="2.1.3.2" evidence="1"/>
<dbReference type="EMBL" id="CP000413">
    <property type="protein sequence ID" value="ABJ60463.1"/>
    <property type="status" value="ALT_INIT"/>
    <property type="molecule type" value="Genomic_DNA"/>
</dbReference>
<dbReference type="RefSeq" id="WP_003647209.1">
    <property type="nucleotide sequence ID" value="NZ_WBMG01000002.1"/>
</dbReference>
<dbReference type="SMR" id="Q043A9"/>
<dbReference type="GeneID" id="29639068"/>
<dbReference type="KEGG" id="lga:LGAS_1090"/>
<dbReference type="HOGENOM" id="CLU_043846_2_1_9"/>
<dbReference type="BioCyc" id="LGAS324831:G1G6Y-1089-MONOMER"/>
<dbReference type="UniPathway" id="UPA00070">
    <property type="reaction ID" value="UER00116"/>
</dbReference>
<dbReference type="Proteomes" id="UP000000664">
    <property type="component" value="Chromosome"/>
</dbReference>
<dbReference type="GO" id="GO:0005829">
    <property type="term" value="C:cytosol"/>
    <property type="evidence" value="ECO:0007669"/>
    <property type="project" value="TreeGrafter"/>
</dbReference>
<dbReference type="GO" id="GO:0016597">
    <property type="term" value="F:amino acid binding"/>
    <property type="evidence" value="ECO:0007669"/>
    <property type="project" value="InterPro"/>
</dbReference>
<dbReference type="GO" id="GO:0004070">
    <property type="term" value="F:aspartate carbamoyltransferase activity"/>
    <property type="evidence" value="ECO:0007669"/>
    <property type="project" value="UniProtKB-UniRule"/>
</dbReference>
<dbReference type="GO" id="GO:0006207">
    <property type="term" value="P:'de novo' pyrimidine nucleobase biosynthetic process"/>
    <property type="evidence" value="ECO:0007669"/>
    <property type="project" value="InterPro"/>
</dbReference>
<dbReference type="GO" id="GO:0044205">
    <property type="term" value="P:'de novo' UMP biosynthetic process"/>
    <property type="evidence" value="ECO:0007669"/>
    <property type="project" value="UniProtKB-UniRule"/>
</dbReference>
<dbReference type="GO" id="GO:0006520">
    <property type="term" value="P:amino acid metabolic process"/>
    <property type="evidence" value="ECO:0007669"/>
    <property type="project" value="InterPro"/>
</dbReference>
<dbReference type="FunFam" id="3.40.50.1370:FF:000011">
    <property type="entry name" value="Aspartate carbamoyltransferase"/>
    <property type="match status" value="1"/>
</dbReference>
<dbReference type="Gene3D" id="3.40.50.1370">
    <property type="entry name" value="Aspartate/ornithine carbamoyltransferase"/>
    <property type="match status" value="2"/>
</dbReference>
<dbReference type="HAMAP" id="MF_00001">
    <property type="entry name" value="Asp_carb_tr"/>
    <property type="match status" value="1"/>
</dbReference>
<dbReference type="InterPro" id="IPR006132">
    <property type="entry name" value="Asp/Orn_carbamoyltranf_P-bd"/>
</dbReference>
<dbReference type="InterPro" id="IPR006130">
    <property type="entry name" value="Asp/Orn_carbamoylTrfase"/>
</dbReference>
<dbReference type="InterPro" id="IPR036901">
    <property type="entry name" value="Asp/Orn_carbamoylTrfase_sf"/>
</dbReference>
<dbReference type="InterPro" id="IPR002082">
    <property type="entry name" value="Asp_carbamoyltransf"/>
</dbReference>
<dbReference type="InterPro" id="IPR006131">
    <property type="entry name" value="Asp_carbamoyltransf_Asp/Orn-bd"/>
</dbReference>
<dbReference type="NCBIfam" id="TIGR00670">
    <property type="entry name" value="asp_carb_tr"/>
    <property type="match status" value="1"/>
</dbReference>
<dbReference type="NCBIfam" id="NF002032">
    <property type="entry name" value="PRK00856.1"/>
    <property type="match status" value="1"/>
</dbReference>
<dbReference type="PANTHER" id="PTHR45753:SF6">
    <property type="entry name" value="ASPARTATE CARBAMOYLTRANSFERASE"/>
    <property type="match status" value="1"/>
</dbReference>
<dbReference type="PANTHER" id="PTHR45753">
    <property type="entry name" value="ORNITHINE CARBAMOYLTRANSFERASE, MITOCHONDRIAL"/>
    <property type="match status" value="1"/>
</dbReference>
<dbReference type="Pfam" id="PF00185">
    <property type="entry name" value="OTCace"/>
    <property type="match status" value="1"/>
</dbReference>
<dbReference type="Pfam" id="PF02729">
    <property type="entry name" value="OTCace_N"/>
    <property type="match status" value="1"/>
</dbReference>
<dbReference type="PRINTS" id="PR00100">
    <property type="entry name" value="AOTCASE"/>
</dbReference>
<dbReference type="PRINTS" id="PR00101">
    <property type="entry name" value="ATCASE"/>
</dbReference>
<dbReference type="SUPFAM" id="SSF53671">
    <property type="entry name" value="Aspartate/ornithine carbamoyltransferase"/>
    <property type="match status" value="1"/>
</dbReference>
<reference key="1">
    <citation type="journal article" date="2006" name="Proc. Natl. Acad. Sci. U.S.A.">
        <title>Comparative genomics of the lactic acid bacteria.</title>
        <authorList>
            <person name="Makarova K.S."/>
            <person name="Slesarev A."/>
            <person name="Wolf Y.I."/>
            <person name="Sorokin A."/>
            <person name="Mirkin B."/>
            <person name="Koonin E.V."/>
            <person name="Pavlov A."/>
            <person name="Pavlova N."/>
            <person name="Karamychev V."/>
            <person name="Polouchine N."/>
            <person name="Shakhova V."/>
            <person name="Grigoriev I."/>
            <person name="Lou Y."/>
            <person name="Rohksar D."/>
            <person name="Lucas S."/>
            <person name="Huang K."/>
            <person name="Goodstein D.M."/>
            <person name="Hawkins T."/>
            <person name="Plengvidhya V."/>
            <person name="Welker D."/>
            <person name="Hughes J."/>
            <person name="Goh Y."/>
            <person name="Benson A."/>
            <person name="Baldwin K."/>
            <person name="Lee J.-H."/>
            <person name="Diaz-Muniz I."/>
            <person name="Dosti B."/>
            <person name="Smeianov V."/>
            <person name="Wechter W."/>
            <person name="Barabote R."/>
            <person name="Lorca G."/>
            <person name="Altermann E."/>
            <person name="Barrangou R."/>
            <person name="Ganesan B."/>
            <person name="Xie Y."/>
            <person name="Rawsthorne H."/>
            <person name="Tamir D."/>
            <person name="Parker C."/>
            <person name="Breidt F."/>
            <person name="Broadbent J.R."/>
            <person name="Hutkins R."/>
            <person name="O'Sullivan D."/>
            <person name="Steele J."/>
            <person name="Unlu G."/>
            <person name="Saier M.H. Jr."/>
            <person name="Klaenhammer T."/>
            <person name="Richardson P."/>
            <person name="Kozyavkin S."/>
            <person name="Weimer B.C."/>
            <person name="Mills D.A."/>
        </authorList>
    </citation>
    <scope>NUCLEOTIDE SEQUENCE [LARGE SCALE GENOMIC DNA]</scope>
    <source>
        <strain>ATCC 33323 / DSM 20243 / BCRC 14619 / CIP 102991 / JCM 1131 / KCTC 3163 / NCIMB 11718 / NCTC 13722 / AM63</strain>
    </source>
</reference>